<protein>
    <recommendedName>
        <fullName>Ferredoxin-type protein FwdE</fullName>
    </recommendedName>
</protein>
<feature type="chain" id="PRO_0000159139" description="Ferredoxin-type protein FwdE">
    <location>
        <begin position="1"/>
        <end position="146"/>
    </location>
</feature>
<feature type="domain" description="4Fe-4S ferredoxin-type 1" evidence="2">
    <location>
        <begin position="90"/>
        <end position="115"/>
    </location>
</feature>
<feature type="domain" description="4Fe-4S ferredoxin-type 2" evidence="2">
    <location>
        <begin position="116"/>
        <end position="145"/>
    </location>
</feature>
<feature type="binding site" evidence="1">
    <location>
        <position position="125"/>
    </location>
    <ligand>
        <name>[4Fe-4S] cluster</name>
        <dbReference type="ChEBI" id="CHEBI:49883"/>
    </ligand>
</feature>
<feature type="binding site" evidence="1">
    <location>
        <position position="128"/>
    </location>
    <ligand>
        <name>[4Fe-4S] cluster</name>
        <dbReference type="ChEBI" id="CHEBI:49883"/>
    </ligand>
</feature>
<feature type="binding site" evidence="1">
    <location>
        <position position="131"/>
    </location>
    <ligand>
        <name>[4Fe-4S] cluster</name>
        <dbReference type="ChEBI" id="CHEBI:49883"/>
    </ligand>
</feature>
<feature type="binding site" evidence="1">
    <location>
        <position position="135"/>
    </location>
    <ligand>
        <name>[4Fe-4S] cluster</name>
        <dbReference type="ChEBI" id="CHEBI:49883"/>
    </ligand>
</feature>
<proteinExistence type="predicted"/>
<accession>Q58565</accession>
<organism>
    <name type="scientific">Methanocaldococcus jannaschii (strain ATCC 43067 / DSM 2661 / JAL-1 / JCM 10045 / NBRC 100440)</name>
    <name type="common">Methanococcus jannaschii</name>
    <dbReference type="NCBI Taxonomy" id="243232"/>
    <lineage>
        <taxon>Archaea</taxon>
        <taxon>Methanobacteriati</taxon>
        <taxon>Methanobacteriota</taxon>
        <taxon>Methanomada group</taxon>
        <taxon>Methanococci</taxon>
        <taxon>Methanococcales</taxon>
        <taxon>Methanocaldococcaceae</taxon>
        <taxon>Methanocaldococcus</taxon>
    </lineage>
</organism>
<name>FWDE_METJA</name>
<gene>
    <name type="primary">fwdE</name>
    <name type="ordered locus">MJ1165</name>
</gene>
<keyword id="KW-0004">4Fe-4S</keyword>
<keyword id="KW-0408">Iron</keyword>
<keyword id="KW-0411">Iron-sulfur</keyword>
<keyword id="KW-0479">Metal-binding</keyword>
<keyword id="KW-1185">Reference proteome</keyword>
<keyword id="KW-0677">Repeat</keyword>
<reference key="1">
    <citation type="journal article" date="1996" name="Science">
        <title>Complete genome sequence of the methanogenic archaeon, Methanococcus jannaschii.</title>
        <authorList>
            <person name="Bult C.J."/>
            <person name="White O."/>
            <person name="Olsen G.J."/>
            <person name="Zhou L."/>
            <person name="Fleischmann R.D."/>
            <person name="Sutton G.G."/>
            <person name="Blake J.A."/>
            <person name="FitzGerald L.M."/>
            <person name="Clayton R.A."/>
            <person name="Gocayne J.D."/>
            <person name="Kerlavage A.R."/>
            <person name="Dougherty B.A."/>
            <person name="Tomb J.-F."/>
            <person name="Adams M.D."/>
            <person name="Reich C.I."/>
            <person name="Overbeek R."/>
            <person name="Kirkness E.F."/>
            <person name="Weinstock K.G."/>
            <person name="Merrick J.M."/>
            <person name="Glodek A."/>
            <person name="Scott J.L."/>
            <person name="Geoghagen N.S.M."/>
            <person name="Weidman J.F."/>
            <person name="Fuhrmann J.L."/>
            <person name="Nguyen D."/>
            <person name="Utterback T.R."/>
            <person name="Kelley J.M."/>
            <person name="Peterson J.D."/>
            <person name="Sadow P.W."/>
            <person name="Hanna M.C."/>
            <person name="Cotton M.D."/>
            <person name="Roberts K.M."/>
            <person name="Hurst M.A."/>
            <person name="Kaine B.P."/>
            <person name="Borodovsky M."/>
            <person name="Klenk H.-P."/>
            <person name="Fraser C.M."/>
            <person name="Smith H.O."/>
            <person name="Woese C.R."/>
            <person name="Venter J.C."/>
        </authorList>
    </citation>
    <scope>NUCLEOTIDE SEQUENCE [LARGE SCALE GENOMIC DNA]</scope>
    <source>
        <strain>ATCC 43067 / DSM 2661 / JAL-1 / JCM 10045 / NBRC 100440</strain>
    </source>
</reference>
<evidence type="ECO:0000255" key="1"/>
<evidence type="ECO:0000255" key="2">
    <source>
        <dbReference type="PROSITE-ProRule" id="PRU00711"/>
    </source>
</evidence>
<evidence type="ECO:0000305" key="3"/>
<comment type="cofactor">
    <cofactor evidence="3">
        <name>[4Fe-4S] cluster</name>
        <dbReference type="ChEBI" id="CHEBI:49883"/>
    </cofactor>
    <text evidence="3">Binds 1 [4Fe-4S] cluster.</text>
</comment>
<sequence length="146" mass="16403">MPEHILSGIKAIVAMKLRRKGLLQKEIAKIIKSDRSIVSHYLSGRYPKEKILNVAKIIEEMPPQYGAKFIHSLTDNKELAKNLIKELYGIKLFWDENSCIACGSCLGCAALTLDNFTVGIDEDTCHLCASCIFRCPTNSLKFIKEE</sequence>
<dbReference type="EMBL" id="L77117">
    <property type="protein sequence ID" value="AAB99167.1"/>
    <property type="molecule type" value="Genomic_DNA"/>
</dbReference>
<dbReference type="PIR" id="D64445">
    <property type="entry name" value="D64445"/>
</dbReference>
<dbReference type="RefSeq" id="WP_010870678.1">
    <property type="nucleotide sequence ID" value="NC_000909.1"/>
</dbReference>
<dbReference type="FunCoup" id="Q58565">
    <property type="interactions" value="97"/>
</dbReference>
<dbReference type="STRING" id="243232.MJ_1165"/>
<dbReference type="PaxDb" id="243232-MJ_1165"/>
<dbReference type="EnsemblBacteria" id="AAB99167">
    <property type="protein sequence ID" value="AAB99167"/>
    <property type="gene ID" value="MJ_1165"/>
</dbReference>
<dbReference type="GeneID" id="1452063"/>
<dbReference type="KEGG" id="mja:MJ_1165"/>
<dbReference type="eggNOG" id="arCOG04891">
    <property type="taxonomic scope" value="Archaea"/>
</dbReference>
<dbReference type="HOGENOM" id="CLU_145181_0_0_2"/>
<dbReference type="InParanoid" id="Q58565"/>
<dbReference type="OrthoDB" id="23833at2157"/>
<dbReference type="Proteomes" id="UP000000805">
    <property type="component" value="Chromosome"/>
</dbReference>
<dbReference type="GO" id="GO:0051539">
    <property type="term" value="F:4 iron, 4 sulfur cluster binding"/>
    <property type="evidence" value="ECO:0007669"/>
    <property type="project" value="UniProtKB-KW"/>
</dbReference>
<dbReference type="GO" id="GO:0046872">
    <property type="term" value="F:metal ion binding"/>
    <property type="evidence" value="ECO:0007669"/>
    <property type="project" value="UniProtKB-KW"/>
</dbReference>
<dbReference type="GO" id="GO:0016491">
    <property type="term" value="F:oxidoreductase activity"/>
    <property type="evidence" value="ECO:0007669"/>
    <property type="project" value="UniProtKB-ARBA"/>
</dbReference>
<dbReference type="Gene3D" id="3.30.70.20">
    <property type="match status" value="1"/>
</dbReference>
<dbReference type="InterPro" id="IPR017896">
    <property type="entry name" value="4Fe4S_Fe-S-bd"/>
</dbReference>
<dbReference type="InterPro" id="IPR017900">
    <property type="entry name" value="4Fe4S_Fe_S_CS"/>
</dbReference>
<dbReference type="Pfam" id="PF00037">
    <property type="entry name" value="Fer4"/>
    <property type="match status" value="1"/>
</dbReference>
<dbReference type="SUPFAM" id="SSF54862">
    <property type="entry name" value="4Fe-4S ferredoxins"/>
    <property type="match status" value="1"/>
</dbReference>
<dbReference type="PROSITE" id="PS00198">
    <property type="entry name" value="4FE4S_FER_1"/>
    <property type="match status" value="1"/>
</dbReference>
<dbReference type="PROSITE" id="PS51379">
    <property type="entry name" value="4FE4S_FER_2"/>
    <property type="match status" value="2"/>
</dbReference>